<sequence length="219" mass="24416">MASASEPPASPRDAADQNFDYMFKLLLIGNSSVGKTSFLFRYADDSFTPAFVSTVGIDFKVKTVYRHDKRIKLQIWDTAGQERYRTITTAYYRGAMGFLLMYDIANQESFTAVQDWATQIKTYSWDNAQVILVGNKCDLEDERVVPAEDGRRLADDLGFEFFEASAKENINVKQVFERLVDIICDKMNESLEPSSSPGSNGKGPALGDTPPPQPSSCSC</sequence>
<protein>
    <recommendedName>
        <fullName>Ras-related protein Rab-3D</fullName>
        <ecNumber evidence="3">3.6.5.2</ecNumber>
    </recommendedName>
</protein>
<keyword id="KW-0007">Acetylation</keyword>
<keyword id="KW-1003">Cell membrane</keyword>
<keyword id="KW-0903">Direct protein sequencing</keyword>
<keyword id="KW-0268">Exocytosis</keyword>
<keyword id="KW-0342">GTP-binding</keyword>
<keyword id="KW-0378">Hydrolase</keyword>
<keyword id="KW-0449">Lipoprotein</keyword>
<keyword id="KW-0460">Magnesium</keyword>
<keyword id="KW-0472">Membrane</keyword>
<keyword id="KW-0479">Metal-binding</keyword>
<keyword id="KW-0488">Methylation</keyword>
<keyword id="KW-0547">Nucleotide-binding</keyword>
<keyword id="KW-0597">Phosphoprotein</keyword>
<keyword id="KW-0636">Prenylation</keyword>
<keyword id="KW-0653">Protein transport</keyword>
<keyword id="KW-1185">Reference proteome</keyword>
<keyword id="KW-0813">Transport</keyword>
<gene>
    <name evidence="13" type="primary">Rab3d</name>
</gene>
<reference key="1">
    <citation type="journal article" date="1992" name="Proc. Natl. Acad. Sci. U.S.A.">
        <title>Cloning of a Rab3 isotype predominantly expressed in adipocytes.</title>
        <authorList>
            <person name="Baldini G."/>
            <person name="Hohl T."/>
            <person name="Lin H.Y."/>
            <person name="Lodish H.F."/>
        </authorList>
    </citation>
    <scope>NUCLEOTIDE SEQUENCE [MRNA]</scope>
    <scope>FUNCTION</scope>
    <scope>TISSUE SPECIFICITY</scope>
</reference>
<reference key="2">
    <citation type="journal article" date="2000" name="Biochem. Biophys. Res. Commun.">
        <title>Genomic organization, chromosomal localization, and expression of the murine RAB3D gene.</title>
        <authorList>
            <person name="Adachi R."/>
            <person name="Nigam R."/>
            <person name="Tuvim M.J."/>
            <person name="DeMayo F."/>
            <person name="Dickey B.F."/>
        </authorList>
    </citation>
    <scope>NUCLEOTIDE SEQUENCE [GENOMIC DNA / MRNA]</scope>
    <source>
        <strain>129/Sv</strain>
    </source>
</reference>
<reference key="3">
    <citation type="journal article" date="2004" name="Genome Res.">
        <title>The status, quality, and expansion of the NIH full-length cDNA project: the Mammalian Gene Collection (MGC).</title>
        <authorList>
            <consortium name="The MGC Project Team"/>
        </authorList>
    </citation>
    <scope>NUCLEOTIDE SEQUENCE [LARGE SCALE MRNA]</scope>
    <source>
        <strain>FVB/N</strain>
        <tissue>Colon</tissue>
        <tissue>Mammary gland</tissue>
    </source>
</reference>
<reference key="4">
    <citation type="submission" date="2007-04" db="UniProtKB">
        <authorList>
            <person name="Lubec G."/>
            <person name="Kang S.U."/>
        </authorList>
    </citation>
    <scope>PROTEIN SEQUENCE OF 25-35; 42-60; 73-83; 122-136 AND 179-186</scope>
    <scope>IDENTIFICATION BY MASS SPECTROMETRY</scope>
    <source>
        <strain>C57BL/6J</strain>
        <tissue>Brain</tissue>
    </source>
</reference>
<reference key="5">
    <citation type="journal article" date="2001" name="J. Biol. Chem.">
        <title>Rim1 and rabphilin-3 bind Rab3-GTP by composite determinants partially related through N-terminal alpha-helix motifs.</title>
        <authorList>
            <person name="Wang X."/>
            <person name="Hu B."/>
            <person name="Zimmermann B."/>
            <person name="Kilimann M.W."/>
        </authorList>
    </citation>
    <scope>INTERACTION WITH RIMS1</scope>
</reference>
<reference key="6">
    <citation type="journal article" date="2003" name="J. Biol. Chem.">
        <title>Distinct Rab binding specificity of Rim1, Rim2, rabphilin, and Noc2. Identification of a critical determinant of Rab3A/Rab27A recognition by Rim2.</title>
        <authorList>
            <person name="Fukuda M."/>
        </authorList>
    </citation>
    <scope>INTERACTION WITH RIMS1; RIMS2; RPH3A AND RPH3AL</scope>
</reference>
<reference key="7">
    <citation type="journal article" date="2008" name="Nat. Cell Biol.">
        <title>KIF1Bbeta- and KIF1A-mediated axonal transport of presynaptic regulator Rab3 occurs in a GTP-dependent manner through DENN/MADD.</title>
        <authorList>
            <person name="Niwa S."/>
            <person name="Tanaka Y."/>
            <person name="Hirokawa N."/>
        </authorList>
    </citation>
    <scope>INTERACTION WITH MADD</scope>
</reference>
<reference key="8">
    <citation type="journal article" date="2010" name="Cell">
        <title>A tissue-specific atlas of mouse protein phosphorylation and expression.</title>
        <authorList>
            <person name="Huttlin E.L."/>
            <person name="Jedrychowski M.P."/>
            <person name="Elias J.E."/>
            <person name="Goswami T."/>
            <person name="Rad R."/>
            <person name="Beausoleil S.A."/>
            <person name="Villen J."/>
            <person name="Haas W."/>
            <person name="Sowa M.E."/>
            <person name="Gygi S.P."/>
        </authorList>
    </citation>
    <scope>IDENTIFICATION BY MASS SPECTROMETRY [LARGE SCALE ANALYSIS]</scope>
    <source>
        <tissue>Heart</tissue>
        <tissue>Lung</tissue>
        <tissue>Pancreas</tissue>
        <tissue>Spleen</tissue>
    </source>
</reference>
<reference key="9">
    <citation type="journal article" date="2017" name="Elife">
        <title>Systematic proteomic analysis of LRRK2-mediated Rab GTPase phosphorylation establishes a connection to ciliogenesis.</title>
        <authorList>
            <person name="Steger M."/>
            <person name="Diez F."/>
            <person name="Dhekne H.S."/>
            <person name="Lis P."/>
            <person name="Nirujogi R.S."/>
            <person name="Karayel O."/>
            <person name="Tonelli F."/>
            <person name="Martinez T.N."/>
            <person name="Lorentzen E."/>
            <person name="Pfeffer S.R."/>
            <person name="Alessi D.R."/>
            <person name="Mann M."/>
        </authorList>
    </citation>
    <scope>PHOSPHORYLATION AT THR-86</scope>
</reference>
<feature type="initiator methionine" description="Removed" evidence="2">
    <location>
        <position position="1"/>
    </location>
</feature>
<feature type="chain" id="PRO_0000121089" description="Ras-related protein Rab-3D">
    <location>
        <begin position="2"/>
        <end position="219"/>
    </location>
</feature>
<feature type="region of interest" description="Disordered" evidence="6">
    <location>
        <begin position="190"/>
        <end position="219"/>
    </location>
</feature>
<feature type="short sequence motif" description="Switch 1" evidence="5">
    <location>
        <begin position="49"/>
        <end position="58"/>
    </location>
</feature>
<feature type="short sequence motif" description="Switch 2" evidence="5">
    <location>
        <begin position="80"/>
        <end position="96"/>
    </location>
</feature>
<feature type="compositionally biased region" description="Low complexity" evidence="6">
    <location>
        <begin position="193"/>
        <end position="203"/>
    </location>
</feature>
<feature type="compositionally biased region" description="Pro residues" evidence="6">
    <location>
        <begin position="209"/>
        <end position="219"/>
    </location>
</feature>
<feature type="binding site" evidence="2">
    <location>
        <begin position="29"/>
        <end position="37"/>
    </location>
    <ligand>
        <name>GDP</name>
        <dbReference type="ChEBI" id="CHEBI:58189"/>
    </ligand>
</feature>
<feature type="binding site" evidence="4">
    <location>
        <position position="31"/>
    </location>
    <ligand>
        <name>GTP</name>
        <dbReference type="ChEBI" id="CHEBI:37565"/>
    </ligand>
</feature>
<feature type="binding site" evidence="4">
    <location>
        <position position="32"/>
    </location>
    <ligand>
        <name>GTP</name>
        <dbReference type="ChEBI" id="CHEBI:37565"/>
    </ligand>
</feature>
<feature type="binding site" evidence="4">
    <location>
        <position position="33"/>
    </location>
    <ligand>
        <name>GTP</name>
        <dbReference type="ChEBI" id="CHEBI:37565"/>
    </ligand>
</feature>
<feature type="binding site" evidence="4">
    <location>
        <position position="34"/>
    </location>
    <ligand>
        <name>GTP</name>
        <dbReference type="ChEBI" id="CHEBI:37565"/>
    </ligand>
</feature>
<feature type="binding site" evidence="4">
    <location>
        <position position="35"/>
    </location>
    <ligand>
        <name>GTP</name>
        <dbReference type="ChEBI" id="CHEBI:37565"/>
    </ligand>
</feature>
<feature type="binding site" evidence="4">
    <location>
        <position position="36"/>
    </location>
    <ligand>
        <name>GTP</name>
        <dbReference type="ChEBI" id="CHEBI:37565"/>
    </ligand>
</feature>
<feature type="binding site" evidence="2">
    <location>
        <position position="36"/>
    </location>
    <ligand>
        <name>Mg(2+)</name>
        <dbReference type="ChEBI" id="CHEBI:18420"/>
    </ligand>
</feature>
<feature type="binding site" evidence="4">
    <location>
        <position position="37"/>
    </location>
    <ligand>
        <name>GTP</name>
        <dbReference type="ChEBI" id="CHEBI:37565"/>
    </ligand>
</feature>
<feature type="binding site" evidence="4">
    <location>
        <position position="49"/>
    </location>
    <ligand>
        <name>GTP</name>
        <dbReference type="ChEBI" id="CHEBI:37565"/>
    </ligand>
</feature>
<feature type="binding site" evidence="4">
    <location>
        <position position="53"/>
    </location>
    <ligand>
        <name>GTP</name>
        <dbReference type="ChEBI" id="CHEBI:37565"/>
    </ligand>
</feature>
<feature type="binding site" evidence="4">
    <location>
        <position position="54"/>
    </location>
    <ligand>
        <name>Mg(2+)</name>
        <dbReference type="ChEBI" id="CHEBI:18420"/>
    </ligand>
</feature>
<feature type="binding site" evidence="4">
    <location>
        <position position="77"/>
    </location>
    <ligand>
        <name>Mg(2+)</name>
        <dbReference type="ChEBI" id="CHEBI:18420"/>
    </ligand>
</feature>
<feature type="binding site" evidence="4">
    <location>
        <position position="80"/>
    </location>
    <ligand>
        <name>GTP</name>
        <dbReference type="ChEBI" id="CHEBI:37565"/>
    </ligand>
</feature>
<feature type="binding site" evidence="2">
    <location>
        <begin position="135"/>
        <end position="138"/>
    </location>
    <ligand>
        <name>GDP</name>
        <dbReference type="ChEBI" id="CHEBI:58189"/>
    </ligand>
</feature>
<feature type="binding site" evidence="4">
    <location>
        <position position="135"/>
    </location>
    <ligand>
        <name>GTP</name>
        <dbReference type="ChEBI" id="CHEBI:37565"/>
    </ligand>
</feature>
<feature type="binding site" evidence="4">
    <location>
        <position position="136"/>
    </location>
    <ligand>
        <name>GTP</name>
        <dbReference type="ChEBI" id="CHEBI:37565"/>
    </ligand>
</feature>
<feature type="binding site" evidence="4">
    <location>
        <position position="138"/>
    </location>
    <ligand>
        <name>GTP</name>
        <dbReference type="ChEBI" id="CHEBI:37565"/>
    </ligand>
</feature>
<feature type="binding site" evidence="2">
    <location>
        <begin position="165"/>
        <end position="167"/>
    </location>
    <ligand>
        <name>GDP</name>
        <dbReference type="ChEBI" id="CHEBI:58189"/>
    </ligand>
</feature>
<feature type="binding site" evidence="4">
    <location>
        <position position="166"/>
    </location>
    <ligand>
        <name>GTP</name>
        <dbReference type="ChEBI" id="CHEBI:37565"/>
    </ligand>
</feature>
<feature type="binding site" evidence="4">
    <location>
        <position position="167"/>
    </location>
    <ligand>
        <name>GTP</name>
        <dbReference type="ChEBI" id="CHEBI:37565"/>
    </ligand>
</feature>
<feature type="modified residue" description="N-acetylalanine" evidence="2">
    <location>
        <position position="2"/>
    </location>
</feature>
<feature type="modified residue" description="Phosphothreonine; by LRRK2" evidence="11">
    <location>
        <position position="86"/>
    </location>
</feature>
<feature type="modified residue" description="Phosphoserine" evidence="4">
    <location>
        <position position="190"/>
    </location>
</feature>
<feature type="modified residue" description="Cysteine methyl ester" evidence="1">
    <location>
        <position position="219"/>
    </location>
</feature>
<feature type="lipid moiety-binding region" description="S-geranylgeranyl cysteine" evidence="1">
    <location>
        <position position="217"/>
    </location>
</feature>
<feature type="lipid moiety-binding region" description="S-geranylgeranyl cysteine" evidence="1">
    <location>
        <position position="219"/>
    </location>
</feature>
<evidence type="ECO:0000250" key="1"/>
<evidence type="ECO:0000250" key="2">
    <source>
        <dbReference type="UniProtKB" id="O95716"/>
    </source>
</evidence>
<evidence type="ECO:0000250" key="3">
    <source>
        <dbReference type="UniProtKB" id="P20336"/>
    </source>
</evidence>
<evidence type="ECO:0000250" key="4">
    <source>
        <dbReference type="UniProtKB" id="P20337"/>
    </source>
</evidence>
<evidence type="ECO:0000250" key="5">
    <source>
        <dbReference type="UniProtKB" id="P63012"/>
    </source>
</evidence>
<evidence type="ECO:0000256" key="6">
    <source>
        <dbReference type="SAM" id="MobiDB-lite"/>
    </source>
</evidence>
<evidence type="ECO:0000269" key="7">
    <source>
    </source>
</evidence>
<evidence type="ECO:0000269" key="8">
    <source>
    </source>
</evidence>
<evidence type="ECO:0000269" key="9">
    <source>
    </source>
</evidence>
<evidence type="ECO:0000269" key="10">
    <source>
    </source>
</evidence>
<evidence type="ECO:0000269" key="11">
    <source>
    </source>
</evidence>
<evidence type="ECO:0000305" key="12"/>
<evidence type="ECO:0000312" key="13">
    <source>
        <dbReference type="MGI" id="MGI:97844"/>
    </source>
</evidence>
<name>RAB3D_MOUSE</name>
<dbReference type="EC" id="3.6.5.2" evidence="3"/>
<dbReference type="EMBL" id="M89777">
    <property type="protein sequence ID" value="AAA40026.1"/>
    <property type="molecule type" value="mRNA"/>
</dbReference>
<dbReference type="EMBL" id="AF263365">
    <property type="protein sequence ID" value="AAF82769.1"/>
    <property type="molecule type" value="mRNA"/>
</dbReference>
<dbReference type="EMBL" id="AF263366">
    <property type="protein sequence ID" value="AAF82770.1"/>
    <property type="molecule type" value="Genomic_DNA"/>
</dbReference>
<dbReference type="EMBL" id="BC010779">
    <property type="protein sequence ID" value="AAH10779.1"/>
    <property type="molecule type" value="mRNA"/>
</dbReference>
<dbReference type="EMBL" id="BC020010">
    <property type="protein sequence ID" value="AAH20010.1"/>
    <property type="molecule type" value="mRNA"/>
</dbReference>
<dbReference type="CCDS" id="CCDS22912.1"/>
<dbReference type="PIR" id="A45384">
    <property type="entry name" value="A45384"/>
</dbReference>
<dbReference type="RefSeq" id="NP_001311460.1">
    <property type="nucleotide sequence ID" value="NM_001324531.1"/>
</dbReference>
<dbReference type="RefSeq" id="NP_114080.2">
    <property type="nucleotide sequence ID" value="NM_031874.5"/>
</dbReference>
<dbReference type="RefSeq" id="XP_011240724.1">
    <property type="nucleotide sequence ID" value="XM_011242422.4"/>
</dbReference>
<dbReference type="RefSeq" id="XP_011240725.1">
    <property type="nucleotide sequence ID" value="XM_011242423.4"/>
</dbReference>
<dbReference type="SMR" id="P35276"/>
<dbReference type="BioGRID" id="202545">
    <property type="interactions" value="10"/>
</dbReference>
<dbReference type="FunCoup" id="P35276">
    <property type="interactions" value="499"/>
</dbReference>
<dbReference type="IntAct" id="P35276">
    <property type="interactions" value="14"/>
</dbReference>
<dbReference type="MINT" id="P35276"/>
<dbReference type="STRING" id="10090.ENSMUSP00000113322"/>
<dbReference type="GlyGen" id="P35276">
    <property type="glycosylation" value="1 site, 1 O-linked glycan (1 site)"/>
</dbReference>
<dbReference type="iPTMnet" id="P35276"/>
<dbReference type="PhosphoSitePlus" id="P35276"/>
<dbReference type="jPOST" id="P35276"/>
<dbReference type="PaxDb" id="10090-ENSMUSP00000113322"/>
<dbReference type="PeptideAtlas" id="P35276"/>
<dbReference type="ProteomicsDB" id="300225"/>
<dbReference type="Pumba" id="P35276"/>
<dbReference type="Antibodypedia" id="25779">
    <property type="antibodies" value="158 antibodies from 28 providers"/>
</dbReference>
<dbReference type="DNASU" id="19340"/>
<dbReference type="Ensembl" id="ENSMUST00000115351.10">
    <property type="protein sequence ID" value="ENSMUSP00000111008.4"/>
    <property type="gene ID" value="ENSMUSG00000019066.14"/>
</dbReference>
<dbReference type="Ensembl" id="ENSMUST00000122211.8">
    <property type="protein sequence ID" value="ENSMUSP00000113322.2"/>
    <property type="gene ID" value="ENSMUSG00000019066.14"/>
</dbReference>
<dbReference type="GeneID" id="19340"/>
<dbReference type="KEGG" id="mmu:19340"/>
<dbReference type="UCSC" id="uc009omu.1">
    <property type="organism name" value="mouse"/>
</dbReference>
<dbReference type="AGR" id="MGI:97844"/>
<dbReference type="CTD" id="9545"/>
<dbReference type="MGI" id="MGI:97844">
    <property type="gene designation" value="Rab3d"/>
</dbReference>
<dbReference type="VEuPathDB" id="HostDB:ENSMUSG00000019066"/>
<dbReference type="eggNOG" id="KOG0093">
    <property type="taxonomic scope" value="Eukaryota"/>
</dbReference>
<dbReference type="GeneTree" id="ENSGT00940000157552"/>
<dbReference type="HOGENOM" id="CLU_041217_10_1_1"/>
<dbReference type="InParanoid" id="P35276"/>
<dbReference type="OMA" id="MEGDINL"/>
<dbReference type="OrthoDB" id="9989112at2759"/>
<dbReference type="PhylomeDB" id="P35276"/>
<dbReference type="TreeFam" id="TF313199"/>
<dbReference type="Reactome" id="R-MMU-6798695">
    <property type="pathway name" value="Neutrophil degranulation"/>
</dbReference>
<dbReference type="Reactome" id="R-MMU-8873719">
    <property type="pathway name" value="RAB geranylgeranylation"/>
</dbReference>
<dbReference type="BioGRID-ORCS" id="19340">
    <property type="hits" value="2 hits in 77 CRISPR screens"/>
</dbReference>
<dbReference type="ChiTaRS" id="Rab3d">
    <property type="organism name" value="mouse"/>
</dbReference>
<dbReference type="PRO" id="PR:P35276"/>
<dbReference type="Proteomes" id="UP000000589">
    <property type="component" value="Chromosome 9"/>
</dbReference>
<dbReference type="RNAct" id="P35276">
    <property type="molecule type" value="protein"/>
</dbReference>
<dbReference type="Bgee" id="ENSMUSG00000019066">
    <property type="expression patterns" value="Expressed in lacrimal gland and 202 other cell types or tissues"/>
</dbReference>
<dbReference type="ExpressionAtlas" id="P35276">
    <property type="expression patterns" value="baseline and differential"/>
</dbReference>
<dbReference type="GO" id="GO:0005881">
    <property type="term" value="C:cytoplasmic microtubule"/>
    <property type="evidence" value="ECO:0007669"/>
    <property type="project" value="Ensembl"/>
</dbReference>
<dbReference type="GO" id="GO:0005739">
    <property type="term" value="C:mitochondrion"/>
    <property type="evidence" value="ECO:0007005"/>
    <property type="project" value="MGI"/>
</dbReference>
<dbReference type="GO" id="GO:0005886">
    <property type="term" value="C:plasma membrane"/>
    <property type="evidence" value="ECO:0007669"/>
    <property type="project" value="UniProtKB-SubCell"/>
</dbReference>
<dbReference type="GO" id="GO:0042588">
    <property type="term" value="C:zymogen granule"/>
    <property type="evidence" value="ECO:0000314"/>
    <property type="project" value="MGI"/>
</dbReference>
<dbReference type="GO" id="GO:0005525">
    <property type="term" value="F:GTP binding"/>
    <property type="evidence" value="ECO:0007669"/>
    <property type="project" value="UniProtKB-KW"/>
</dbReference>
<dbReference type="GO" id="GO:0030742">
    <property type="term" value="F:GTP-dependent protein binding"/>
    <property type="evidence" value="ECO:0000353"/>
    <property type="project" value="MGI"/>
</dbReference>
<dbReference type="GO" id="GO:0003924">
    <property type="term" value="F:GTPase activity"/>
    <property type="evidence" value="ECO:0007669"/>
    <property type="project" value="InterPro"/>
</dbReference>
<dbReference type="GO" id="GO:0031489">
    <property type="term" value="F:myosin V binding"/>
    <property type="evidence" value="ECO:0007669"/>
    <property type="project" value="Ensembl"/>
</dbReference>
<dbReference type="GO" id="GO:0045453">
    <property type="term" value="P:bone resorption"/>
    <property type="evidence" value="ECO:0007669"/>
    <property type="project" value="Ensembl"/>
</dbReference>
<dbReference type="GO" id="GO:0006887">
    <property type="term" value="P:exocytosis"/>
    <property type="evidence" value="ECO:0007669"/>
    <property type="project" value="UniProtKB-KW"/>
</dbReference>
<dbReference type="GO" id="GO:1903307">
    <property type="term" value="P:positive regulation of regulated secretory pathway"/>
    <property type="evidence" value="ECO:0007669"/>
    <property type="project" value="Ensembl"/>
</dbReference>
<dbReference type="GO" id="GO:0015031">
    <property type="term" value="P:protein transport"/>
    <property type="evidence" value="ECO:0007669"/>
    <property type="project" value="UniProtKB-KW"/>
</dbReference>
<dbReference type="GO" id="GO:0017157">
    <property type="term" value="P:regulation of exocytosis"/>
    <property type="evidence" value="ECO:0000314"/>
    <property type="project" value="MGI"/>
</dbReference>
<dbReference type="CDD" id="cd01865">
    <property type="entry name" value="Rab3"/>
    <property type="match status" value="1"/>
</dbReference>
<dbReference type="FunFam" id="3.40.50.300:FF:000448">
    <property type="entry name" value="RAB3D, member RAS oncogene family"/>
    <property type="match status" value="1"/>
</dbReference>
<dbReference type="Gene3D" id="3.40.50.300">
    <property type="entry name" value="P-loop containing nucleotide triphosphate hydrolases"/>
    <property type="match status" value="1"/>
</dbReference>
<dbReference type="InterPro" id="IPR027417">
    <property type="entry name" value="P-loop_NTPase"/>
</dbReference>
<dbReference type="InterPro" id="IPR037872">
    <property type="entry name" value="Rab3"/>
</dbReference>
<dbReference type="InterPro" id="IPR005225">
    <property type="entry name" value="Small_GTP-bd"/>
</dbReference>
<dbReference type="InterPro" id="IPR001806">
    <property type="entry name" value="Small_GTPase"/>
</dbReference>
<dbReference type="InterPro" id="IPR050305">
    <property type="entry name" value="Small_GTPase_Rab"/>
</dbReference>
<dbReference type="NCBIfam" id="TIGR00231">
    <property type="entry name" value="small_GTP"/>
    <property type="match status" value="1"/>
</dbReference>
<dbReference type="PANTHER" id="PTHR47980">
    <property type="entry name" value="LD44762P"/>
    <property type="match status" value="1"/>
</dbReference>
<dbReference type="Pfam" id="PF00071">
    <property type="entry name" value="Ras"/>
    <property type="match status" value="1"/>
</dbReference>
<dbReference type="PRINTS" id="PR00449">
    <property type="entry name" value="RASTRNSFRMNG"/>
</dbReference>
<dbReference type="SMART" id="SM00175">
    <property type="entry name" value="RAB"/>
    <property type="match status" value="1"/>
</dbReference>
<dbReference type="SMART" id="SM00176">
    <property type="entry name" value="RAN"/>
    <property type="match status" value="1"/>
</dbReference>
<dbReference type="SMART" id="SM00173">
    <property type="entry name" value="RAS"/>
    <property type="match status" value="1"/>
</dbReference>
<dbReference type="SMART" id="SM00174">
    <property type="entry name" value="RHO"/>
    <property type="match status" value="1"/>
</dbReference>
<dbReference type="SUPFAM" id="SSF52540">
    <property type="entry name" value="P-loop containing nucleoside triphosphate hydrolases"/>
    <property type="match status" value="1"/>
</dbReference>
<dbReference type="PROSITE" id="PS51419">
    <property type="entry name" value="RAB"/>
    <property type="match status" value="1"/>
</dbReference>
<proteinExistence type="evidence at protein level"/>
<accession>P35276</accession>
<organism>
    <name type="scientific">Mus musculus</name>
    <name type="common">Mouse</name>
    <dbReference type="NCBI Taxonomy" id="10090"/>
    <lineage>
        <taxon>Eukaryota</taxon>
        <taxon>Metazoa</taxon>
        <taxon>Chordata</taxon>
        <taxon>Craniata</taxon>
        <taxon>Vertebrata</taxon>
        <taxon>Euteleostomi</taxon>
        <taxon>Mammalia</taxon>
        <taxon>Eutheria</taxon>
        <taxon>Euarchontoglires</taxon>
        <taxon>Glires</taxon>
        <taxon>Rodentia</taxon>
        <taxon>Myomorpha</taxon>
        <taxon>Muroidea</taxon>
        <taxon>Muridae</taxon>
        <taxon>Murinae</taxon>
        <taxon>Mus</taxon>
        <taxon>Mus</taxon>
    </lineage>
</organism>
<comment type="function">
    <text evidence="3 9">The small GTPases Rab are key regulators of intracellular membrane trafficking, from the formation of transport vesicles to their fusion with membranes. Rabs cycle between an inactive GDP-bound form and an active GTP-bound form that is able to recruit to membranes different sets of downstream effectors directly responsible for vesicle formation, movement, tethering and fusion (By similarity). RAB3D may be involved in the insulin-induced exocytosis of GLUT4-containing vesicles in adipocytes (PubMed:1594612).</text>
</comment>
<comment type="catalytic activity">
    <reaction evidence="3">
        <text>GTP + H2O = GDP + phosphate + H(+)</text>
        <dbReference type="Rhea" id="RHEA:19669"/>
        <dbReference type="ChEBI" id="CHEBI:15377"/>
        <dbReference type="ChEBI" id="CHEBI:15378"/>
        <dbReference type="ChEBI" id="CHEBI:37565"/>
        <dbReference type="ChEBI" id="CHEBI:43474"/>
        <dbReference type="ChEBI" id="CHEBI:58189"/>
        <dbReference type="EC" id="3.6.5.2"/>
    </reaction>
    <physiologicalReaction direction="left-to-right" evidence="3">
        <dbReference type="Rhea" id="RHEA:19670"/>
    </physiologicalReaction>
</comment>
<comment type="cofactor">
    <cofactor evidence="2">
        <name>Mg(2+)</name>
        <dbReference type="ChEBI" id="CHEBI:18420"/>
    </cofactor>
</comment>
<comment type="activity regulation">
    <text evidence="3">Regulated by guanine nucleotide exchange factors (GEFs) which promote the exchange of bound GDP for free GTP. Regulated by GTPase activating proteins (GAPs) which increase the GTP hydrolysis activity. Inhibited by GDP dissociation inhibitors (GDIs) which prevent Rab-GDP dissociation.</text>
</comment>
<comment type="subunit">
    <text evidence="2 7 8 10">Interacts with RIMS1, RIMS2, RPH3A, RPH3AL and RAB3IP (PubMed:11431472, PubMed:12578829). The GTP-bound form interacts with REP15 (By similarity). Interacts with CHM and CHML; phosphorylation at Thr-86 disrupts these interactions (By similarity). Interacts with MADD (via uDENN domain); the GTP-bound form is preferred for interaction (PubMed:18849981).</text>
</comment>
<comment type="subcellular location">
    <subcellularLocation>
        <location evidence="12">Cell membrane</location>
        <topology evidence="12">Lipid-anchor</topology>
        <orientation evidence="12">Cytoplasmic side</orientation>
    </subcellularLocation>
</comment>
<comment type="tissue specificity">
    <text evidence="9">Predominantly expressed in the adipocyte tissue, but is also expressed in several other organs including skin, spleen, heart and lung.</text>
</comment>
<comment type="domain">
    <text evidence="5">Switch 1, switch 2 and the interswitch regions are characteristic of Rab GTPases and mediate the interactions with Rab downstream effectors. The switch regions undergo conformational changes upon nucleotide binding which drives interaction with specific sets of effector proteins, with most effectors only binding to GTP-bound Rab.</text>
</comment>
<comment type="PTM">
    <text evidence="2">Phosphorylation of Thr-86 in the switch II region by LRRK2 prevents the association of RAB regulatory proteins, including CHM and CHML.</text>
</comment>
<comment type="similarity">
    <text evidence="12">Belongs to the small GTPase superfamily. Rab family.</text>
</comment>